<keyword id="KW-0002">3D-structure</keyword>
<keyword id="KW-0025">Alternative splicing</keyword>
<keyword id="KW-0130">Cell adhesion</keyword>
<keyword id="KW-0175">Coiled coil</keyword>
<keyword id="KW-1015">Disulfide bond</keyword>
<keyword id="KW-0245">EGF-like domain</keyword>
<keyword id="KW-0272">Extracellular matrix</keyword>
<keyword id="KW-0325">Glycoprotein</keyword>
<keyword id="KW-0597">Phosphoprotein</keyword>
<keyword id="KW-0654">Proteoglycan</keyword>
<keyword id="KW-1185">Reference proteome</keyword>
<keyword id="KW-0677">Repeat</keyword>
<keyword id="KW-0964">Secreted</keyword>
<keyword id="KW-0730">Sialic acid</keyword>
<keyword id="KW-0732">Signal</keyword>
<name>TENR_RAT</name>
<comment type="function">
    <text evidence="1 5 7 14">Neural extracellular matrix (ECM) protein involved in interactions with different cells and matrix components. Theses interactions can influence cellular behavior by either evoking a stable adhesion and differentiation, or repulsion and inhibition of neurite growth. Binding to cell surface gangliosides inhibits RGD-dependent integrin-mediated cell adhesion and results in an inhibition of PTK2/FAK1 (FAK) phosphorylation and cell detachment. Binding to membrane surface sulfatides results in a oligodendrocyte adhesion and differentiation. Interaction with CNTN1 induces a repulsion of neurons and an inhibition of neurite outgrowth. Interacts with SCN2B may play a crucial role in clustering and regulation of activity of sodium channels at nodes of Ranvier. TNR-linked chondroitin sulfate glycosaminoglycans are involved in the interaction with FN1 and mediates inhibition of cell adhesion and neurite outgrowth. The highly regulated addition of sulfated carbohydrate structure may modulate the adhesive properties of TNR over the course of development and during synapse maintenance (By similarity).</text>
</comment>
<comment type="subunit">
    <text evidence="1 8 11 12 13 14">Forms oligomers. Interacts with TNC and FN1 (By similarity). Interacts with BCAN and ACAN in a calcium -dependent manner. Interacts with CNTN1, SCN2B, PTPRZ1, and CSPG3.</text>
</comment>
<comment type="subcellular location">
    <subcellularLocation>
        <location>Secreted</location>
        <location>Extracellular space</location>
        <location>Extracellular matrix</location>
    </subcellularLocation>
</comment>
<comment type="alternative products">
    <event type="alternative splicing"/>
    <isoform>
        <id>Q05546-1</id>
        <name>1</name>
        <name>TN-R 180</name>
        <name>180 kDa form</name>
        <sequence type="displayed"/>
    </isoform>
    <isoform>
        <id>Q05546-2</id>
        <name>2</name>
        <name>TN-R 160</name>
        <name>160 kDa form</name>
        <sequence type="described" ref="VSP_012995"/>
    </isoform>
</comment>
<comment type="tissue specificity">
    <text evidence="9 10">Brain-specific (PubMed:7679676). Expressed in oligodendrocytes and small subsets of neurons (mainly interneurons and motoneurons) of the cerebellum, hippocampus and olfactory bulb (PubMed:7679676). Expressed in dorsal root ganglia (PubMed:28270793).</text>
</comment>
<comment type="developmental stage">
    <text evidence="7 10">Expression in oligodendrocytes is highest between the second and third postnatal week and low in the adult. In contrast the expression in neurons increases from birth to third postnatal week and is continuous from late development to adulthood. Isoform 1 is the dominant form early in development. Isoform 2 is more prominent later in development and in adulthood.</text>
</comment>
<comment type="induction">
    <text evidence="9">Transiently increased in dorsal root ganglia 1 day post-dorsal rhizotomy, returning to comparable levels 3 days post-injury (PubMed:28270793). Increased in dorsal root ganglia in response to both sciatic nerve crush and transection injury (PubMed:28270793).</text>
</comment>
<comment type="domain">
    <text>The EGF-like domains mediate interaction with CNTN1. The fibronectin type-III domains 3-5 mediate interaction with BCAN. The fibronectin type-III domains 1-2 and 7-9 mediate interaction with SCN2B.</text>
</comment>
<comment type="PTM">
    <text evidence="1 5 6 7">Contains N-linked oligosaccharides, O-linked sialylated structures (By similarity). Contains O-linked chondroitin sulfate glycosaminoglycans. Contains N-linked oligosaccharides with a sulfated carbohydrate structure type GalNAc-4-SO4 or HNK-1 (SO4-3-GlcUABeta1,3GalBeta1,4GlcNAc). The levels of HNK-1 rise and fall in parallel to those of TNR during postnatal development of the cerebellum. In contrast, levels of GalNAc-4-SO4 are regulated independently from those of TNR, rising late in cerebellar development and continuing into adulthood. Early in postnatal development, GalNAc-4-SO4 is found predominantly on isoform 1, whereas in the adult it is predominantly on isoform 2.</text>
</comment>
<comment type="similarity">
    <text evidence="16">Belongs to the tenascin family.</text>
</comment>
<proteinExistence type="evidence at protein level"/>
<organism>
    <name type="scientific">Rattus norvegicus</name>
    <name type="common">Rat</name>
    <dbReference type="NCBI Taxonomy" id="10116"/>
    <lineage>
        <taxon>Eukaryota</taxon>
        <taxon>Metazoa</taxon>
        <taxon>Chordata</taxon>
        <taxon>Craniata</taxon>
        <taxon>Vertebrata</taxon>
        <taxon>Euteleostomi</taxon>
        <taxon>Mammalia</taxon>
        <taxon>Eutheria</taxon>
        <taxon>Euarchontoglires</taxon>
        <taxon>Glires</taxon>
        <taxon>Rodentia</taxon>
        <taxon>Myomorpha</taxon>
        <taxon>Muroidea</taxon>
        <taxon>Muridae</taxon>
        <taxon>Murinae</taxon>
        <taxon>Rattus</taxon>
    </lineage>
</organism>
<accession>Q05546</accession>
<protein>
    <recommendedName>
        <fullName>Tenascin-R</fullName>
        <shortName>TN-R</shortName>
    </recommendedName>
    <alternativeName>
        <fullName>Janusin</fullName>
    </alternativeName>
    <alternativeName>
        <fullName>Neural recognition molecule J1-160/180</fullName>
    </alternativeName>
    <alternativeName>
        <fullName>Restrictin</fullName>
    </alternativeName>
</protein>
<reference key="1">
    <citation type="journal article" date="1993" name="J. Cell Biol.">
        <title>Molecular characterization and in situ mRNA localization of the neural recognition molecule J1-160/180: a modular structure similar to tenascin.</title>
        <authorList>
            <person name="Fuss B."/>
            <person name="Wintergerst E.-S."/>
            <person name="Bartsch U."/>
            <person name="Schachner M."/>
        </authorList>
    </citation>
    <scope>NUCLEOTIDE SEQUENCE [MRNA] (ISOFORMS 1 AND 2)</scope>
    <scope>DEVELOPMENTAL STAGE</scope>
    <scope>TISSUE SPECIFICITY</scope>
</reference>
<reference key="2">
    <citation type="journal article" date="1996" name="Eur. J. Neurosci.">
        <title>Distinct effects of recombinant tenascin-R domains in neuronal cell functions and identification of the domain interacting with the neuronal recognition molecule F3/11.</title>
        <authorList>
            <person name="Xiao Z.-C."/>
            <person name="Taylor J."/>
            <person name="Montag D."/>
            <person name="Rougon G."/>
            <person name="Schachner M."/>
        </authorList>
    </citation>
    <scope>INTERACTION WITH CNTN1</scope>
</reference>
<reference key="3">
    <citation type="journal article" date="1997" name="Proc. Natl. Acad. Sci. U.S.A.">
        <title>The C-type lectin domains of lecticans, a family of aggregating chondroitin sulfate proteoglycans, bind tenascin-R by protein-protein interactions independent of carbohydrate moiety.</title>
        <authorList>
            <person name="Aspberg A."/>
            <person name="Miura R."/>
            <person name="Bourdoulous S."/>
            <person name="Shimonaka M."/>
            <person name="Heinegard D."/>
            <person name="Schachner M."/>
            <person name="Ruoslahti E."/>
            <person name="Yamaguchi Y."/>
        </authorList>
    </citation>
    <scope>INTERACTION WITH BCAN</scope>
</reference>
<reference key="4">
    <citation type="journal article" date="1998" name="Proc. Natl. Acad. Sci. U.S.A.">
        <title>Interaction of voltage-gated sodium channels with the extracellular matrix molecules tenascin-C and tenascin-R.</title>
        <authorList>
            <person name="Srinivasan J."/>
            <person name="Schachner M."/>
            <person name="Catterall W.A."/>
        </authorList>
    </citation>
    <scope>INTERACTION WITH SCN2B</scope>
    <scope>FUNCTION</scope>
</reference>
<reference key="5">
    <citation type="journal article" date="1998" name="J. Biol. Chem.">
        <title>High affinity binding and overlapping localization of neurocan and phosphacan/protein-tyrosine phosphatase-zeta/beta with tenascin-R, amphoterin, and the heparin-binding growth-associated molecule.</title>
        <authorList>
            <person name="Milev P."/>
            <person name="Chiba A."/>
            <person name="Haring M."/>
            <person name="Rauvala H."/>
            <person name="Schachner M."/>
            <person name="Ranscht B."/>
            <person name="Margolis R.K."/>
            <person name="Margolis R.U."/>
        </authorList>
    </citation>
    <scope>INTERACTION WITH PTPRZ1 AND CSPG3</scope>
</reference>
<reference key="6">
    <citation type="journal article" date="2000" name="J. Neurosci. Res.">
        <title>Chondroitin sulfates expressed on oligodendrocyte-derived tenascin-R are involved in neural cell recognition. Functional implications during CNS development and regeneration.</title>
        <authorList>
            <person name="Probstmeier R."/>
            <person name="Stichel C.C."/>
            <person name="Muller H.W."/>
            <person name="Asou H."/>
            <person name="Pesheva P."/>
        </authorList>
    </citation>
    <scope>GLYCOSYLATION</scope>
    <scope>FUNCTION</scope>
</reference>
<reference key="7">
    <citation type="journal article" date="2002" name="J. Biol. Chem.">
        <title>Spatial and temporal regulation of tenascin-R glycosylation in the cerebellum.</title>
        <authorList>
            <person name="Woodworth A."/>
            <person name="Fiete D."/>
            <person name="Baenziger J.U."/>
        </authorList>
    </citation>
    <scope>GLYCOSYLATION</scope>
</reference>
<reference key="8">
    <citation type="journal article" date="2004" name="J. Biol. Chem.">
        <title>Neuronal-specific synthesis and glycosylation of tenascin-R.</title>
        <authorList>
            <person name="Woodworth A."/>
            <person name="Pesheva P."/>
            <person name="Fiete D."/>
            <person name="Baenziger J.U."/>
        </authorList>
    </citation>
    <scope>GLYCOSYLATION</scope>
    <scope>DEVELOPMENTAL STAGE</scope>
    <scope>FUNCTION</scope>
</reference>
<reference key="9">
    <citation type="journal article" date="2012" name="Nat. Commun.">
        <title>Quantitative maps of protein phosphorylation sites across 14 different rat organs and tissues.</title>
        <authorList>
            <person name="Lundby A."/>
            <person name="Secher A."/>
            <person name="Lage K."/>
            <person name="Nordsborg N.B."/>
            <person name="Dmytriyev A."/>
            <person name="Lundby C."/>
            <person name="Olsen J.V."/>
        </authorList>
    </citation>
    <scope>PHOSPHORYLATION [LARGE SCALE ANALYSIS] AT SER-723</scope>
    <scope>IDENTIFICATION BY MASS SPECTROMETRY [LARGE SCALE ANALYSIS]</scope>
</reference>
<reference key="10">
    <citation type="journal article" date="2013" name="J. Proteome Res.">
        <title>Site-specific glycan-peptide analysis for determination of N-glycoproteome heterogeneity.</title>
        <authorList>
            <person name="Parker B.L."/>
            <person name="Thaysen-Andersen M."/>
            <person name="Solis N."/>
            <person name="Scott N.E."/>
            <person name="Larsen M.R."/>
            <person name="Graham M.E."/>
            <person name="Packer N.H."/>
            <person name="Cordwell S.J."/>
        </authorList>
    </citation>
    <scope>GLYCOSYLATION [LARGE SCALE ANALYSIS] AT ASN-1259</scope>
    <scope>IDENTIFICATION BY MASS SPECTROMETRY [LARGE SCALE ANALYSIS]</scope>
    <source>
        <tissue>Brain</tissue>
    </source>
</reference>
<reference key="11">
    <citation type="journal article" date="2017" name="Front. Neurol.">
        <title>Expression of Semaphorins, Neuropilins, VEGF, and Tenascins in Rat and Human Primary Sensory Neurons after a Dorsal Root Injury.</title>
        <authorList>
            <person name="Lindholm T."/>
            <person name="Risling M."/>
            <person name="Carlstedt T."/>
            <person name="Hammarberg H."/>
            <person name="Wallquist W."/>
            <person name="Cullheim S."/>
            <person name="Skoeld M.K."/>
        </authorList>
    </citation>
    <scope>TISSUE SPECIFICITY</scope>
    <scope>INDUCTION BY INJURY</scope>
</reference>
<reference key="12">
    <citation type="journal article" date="2004" name="Structure">
        <title>Structural basis for interactions between tenascins and lectican C-type lectin domains: evidence for a crosslinking role for tenascins.</title>
        <authorList>
            <person name="Lundell A."/>
            <person name="Olin A.I."/>
            <person name="Morgelin M."/>
            <person name="al-Karadaghi S."/>
            <person name="Aspberg A."/>
            <person name="Logan D.T."/>
        </authorList>
    </citation>
    <scope>X-RAY CRYSTALLOGRAPHY (2.6 ANGSTROMS) OF 489-771</scope>
    <scope>INTERACTION WITH ACAN</scope>
</reference>
<gene>
    <name type="primary">Tnr</name>
</gene>
<sequence length="1356" mass="149371">MGIEGETVVLKNMLIGVNLILLGSMLKPSECRLEVTTERVQRQTVEEEGGASSYNTSSKEQPMVFNHVYNINVPLESLCSSGLEASAEQDVSAEDDTLAEYTGQTSDHESQVTFTHKINLPKKACPCASSAQVLQELLSRIEMLEREVSVLRDQCNTNCCQESAATGQLDYVPHCSGHGNFSFESCGCICNEGWFGKNCSEPYCPLGCSSRGVCVDGQCICDSEYSGDDCSELRCPTDCSSRGLCVDGECVCEEPYTGEDCRELRCPGDCSGKGQCANGTCLCQEGYAGEDCSQRRCLNACSGRGHCQEGLCICEEGYQGPDCSAVTPPEDLRVAGISDRSIELEWDGPMAVTEYVISYQPSLGGLQLQQRVPGDWSGVTITELEPGLTYNISVYAVISNILSLPITAKVATHLSTPQGLQFKTITETTVEVQWEPFSFSFDGWEISFTPKNNEGGVIAQLPSDVTSFNQTGLKPGEEYIVNVVALKEQARGPPTSASVSTVIDGPTQILVRDVSDTVAFVEWTPPRAKVDFILLKYGLVGGEGGKTTFRLQPPLSQYSVQALRPGSRYEVSISAVRGTNESDASSTQFTTEIDAPKNLRVGSRTATSLDLEWDNSEAEAQEYKVVYSTLAGEQYHEVLVPKGIGPTTKTTLTDLVPGTEYGVGISAVMNSKQSIPATMNARTELDSPRDLMVTASSETSISLIWTKASGPIDHYRITFTPSSGISSEVTVPRDRTSYTLTDLEPGAEYIISITAERGRQQSLESTVDAFTGFRPISHLHFSHVTSSSVNITWSDPSPPADRLILNYSPRDEEEEMMEVLLDATKRHAVLMGLQPATEYIVNLVAVHGTVTSEPIVGSITTGIDPPKNITISNVTKDSLTVSWSPPVAPFDYYEYPIDHPSGRLDSSVVPNTVTEFTITRLYPASQYEISLNSVRGREESERICTLVHTAMDSPMDLIATNITPTEALLQWKAPMGEVENYVIVLTHFAMAGETILVDGVSEEFQLVDLLPRTHYTVTMYATSGPLVSGTIATNFSTLLDPPANLTASEVTRQSALISWQPPRAAIENYVLTYKSTDGSRKELIVDAEDTWIRLEGLSENTDYTVLLQAAQEATRSSLTSTIFTTGGRVFSHPQDCAQHLMNGDTLSGVYTIFLNGELSHKLQVYCDMTTDGGGWIVFQRRQNGQTDFFRKWADYRVGFGNLEDEFWLGLDNYHRITAQGRYELRVDMRDGQEAVFAYYDKFAVEDSRSLYKLRIGGYNGTAGDSLSYHQGRPFSTEDRDNDVAVTNCAMSYKGAWWYKNCHRTNLNGKYGESRHSQGINWYHWKGHEFSIPFVEMKMRPYIHRLTAGRKRRALKF</sequence>
<evidence type="ECO:0000250" key="1"/>
<evidence type="ECO:0000255" key="2"/>
<evidence type="ECO:0000255" key="3">
    <source>
        <dbReference type="PROSITE-ProRule" id="PRU00316"/>
    </source>
</evidence>
<evidence type="ECO:0000255" key="4">
    <source>
        <dbReference type="PROSITE-ProRule" id="PRU00739"/>
    </source>
</evidence>
<evidence type="ECO:0000269" key="5">
    <source>
    </source>
</evidence>
<evidence type="ECO:0000269" key="6">
    <source>
    </source>
</evidence>
<evidence type="ECO:0000269" key="7">
    <source>
    </source>
</evidence>
<evidence type="ECO:0000269" key="8">
    <source>
    </source>
</evidence>
<evidence type="ECO:0000269" key="9">
    <source>
    </source>
</evidence>
<evidence type="ECO:0000269" key="10">
    <source>
    </source>
</evidence>
<evidence type="ECO:0000269" key="11">
    <source>
    </source>
</evidence>
<evidence type="ECO:0000269" key="12">
    <source>
    </source>
</evidence>
<evidence type="ECO:0000269" key="13">
    <source>
    </source>
</evidence>
<evidence type="ECO:0000269" key="14">
    <source>
    </source>
</evidence>
<evidence type="ECO:0000303" key="15">
    <source>
    </source>
</evidence>
<evidence type="ECO:0000305" key="16"/>
<evidence type="ECO:0007744" key="17">
    <source>
    </source>
</evidence>
<evidence type="ECO:0007744" key="18">
    <source>
    </source>
</evidence>
<evidence type="ECO:0007829" key="19">
    <source>
        <dbReference type="PDB" id="1TDQ"/>
    </source>
</evidence>
<feature type="signal peptide" evidence="2">
    <location>
        <begin position="1"/>
        <end position="31"/>
    </location>
</feature>
<feature type="chain" id="PRO_0000007749" description="Tenascin-R">
    <location>
        <begin position="32"/>
        <end position="1356"/>
    </location>
</feature>
<feature type="domain" description="EGF-like 1">
    <location>
        <begin position="188"/>
        <end position="199"/>
    </location>
</feature>
<feature type="domain" description="EGF-like 2">
    <location>
        <begin position="204"/>
        <end position="230"/>
    </location>
</feature>
<feature type="domain" description="EGF-like 3">
    <location>
        <begin position="235"/>
        <end position="261"/>
    </location>
</feature>
<feature type="domain" description="EGF-like 4">
    <location>
        <begin position="281"/>
        <end position="292"/>
    </location>
</feature>
<feature type="domain" description="EGF-like 5">
    <location>
        <begin position="293"/>
        <end position="324"/>
    </location>
</feature>
<feature type="domain" description="Fibronectin type-III 1" evidence="3">
    <location>
        <begin position="328"/>
        <end position="419"/>
    </location>
</feature>
<feature type="domain" description="Fibronectin type-III 2" evidence="3">
    <location>
        <begin position="420"/>
        <end position="504"/>
    </location>
</feature>
<feature type="domain" description="Fibronectin type-III 3" evidence="3">
    <location>
        <begin position="505"/>
        <end position="596"/>
    </location>
</feature>
<feature type="domain" description="Fibronectin type-III 4" evidence="3">
    <location>
        <begin position="597"/>
        <end position="686"/>
    </location>
</feature>
<feature type="domain" description="Fibronectin type-III 5" evidence="3">
    <location>
        <begin position="687"/>
        <end position="776"/>
    </location>
</feature>
<feature type="domain" description="Fibronectin type-III 6" evidence="3">
    <location>
        <begin position="777"/>
        <end position="864"/>
    </location>
</feature>
<feature type="domain" description="Fibronectin type-III 7" evidence="3">
    <location>
        <begin position="865"/>
        <end position="953"/>
    </location>
</feature>
<feature type="domain" description="Fibronectin type-III 8" evidence="3">
    <location>
        <begin position="954"/>
        <end position="1040"/>
    </location>
</feature>
<feature type="domain" description="Fibronectin type-III 9" evidence="3">
    <location>
        <begin position="1041"/>
        <end position="1129"/>
    </location>
</feature>
<feature type="domain" description="Fibrinogen C-terminal" evidence="4">
    <location>
        <begin position="1127"/>
        <end position="1342"/>
    </location>
</feature>
<feature type="coiled-coil region" evidence="2">
    <location>
        <begin position="127"/>
        <end position="157"/>
    </location>
</feature>
<feature type="modified residue" description="Phosphoserine" evidence="17">
    <location>
        <position position="723"/>
    </location>
</feature>
<feature type="glycosylation site" description="N-linked (GlcNAc...) asparagine" evidence="2">
    <location>
        <position position="55"/>
    </location>
</feature>
<feature type="glycosylation site" description="O-linked (Xyl...) (chondroitin sulfate) serine" evidence="2">
    <location>
        <position position="176"/>
    </location>
</feature>
<feature type="glycosylation site" description="N-linked (GlcNAc...) asparagine" evidence="2">
    <location>
        <position position="180"/>
    </location>
</feature>
<feature type="glycosylation site" description="N-linked (GlcNAc...) asparagine" evidence="2">
    <location>
        <position position="198"/>
    </location>
</feature>
<feature type="glycosylation site" description="O-linked (Xyl...) (chondroitin sulfate) serine" evidence="2">
    <location>
        <position position="271"/>
    </location>
</feature>
<feature type="glycosylation site" description="N-linked (GlcNAc...) asparagine" evidence="2">
    <location>
        <position position="278"/>
    </location>
</feature>
<feature type="glycosylation site" description="O-linked (Xyl...) (chondroitin sulfate) serine" evidence="2">
    <location>
        <position position="302"/>
    </location>
</feature>
<feature type="glycosylation site" description="N-linked (GlcNAc...) asparagine" evidence="2">
    <location>
        <position position="391"/>
    </location>
</feature>
<feature type="glycosylation site" description="N-linked (GlcNAc...) asparagine" evidence="2">
    <location>
        <position position="469"/>
    </location>
</feature>
<feature type="glycosylation site" description="N-linked (GlcNAc...) asparagine" evidence="2">
    <location>
        <position position="580"/>
    </location>
</feature>
<feature type="glycosylation site" description="N-linked (GlcNAc...) asparagine" evidence="2">
    <location>
        <position position="790"/>
    </location>
</feature>
<feature type="glycosylation site" description="N-linked (GlcNAc...) asparagine" evidence="2">
    <location>
        <position position="868"/>
    </location>
</feature>
<feature type="glycosylation site" description="N-linked (GlcNAc...) asparagine" evidence="2">
    <location>
        <position position="873"/>
    </location>
</feature>
<feature type="glycosylation site" description="N-linked (GlcNAc...) asparagine" evidence="2">
    <location>
        <position position="1034"/>
    </location>
</feature>
<feature type="glycosylation site" description="N-linked (GlcNAc...) asparagine" evidence="2">
    <location>
        <position position="1044"/>
    </location>
</feature>
<feature type="glycosylation site" description="N-linked (GlcNAc...) asparagine" evidence="18">
    <location>
        <position position="1259"/>
    </location>
</feature>
<feature type="disulfide bond" evidence="4">
    <location>
        <begin position="297"/>
        <end position="307"/>
    </location>
</feature>
<feature type="disulfide bond" evidence="4">
    <location>
        <begin position="314"/>
        <end position="323"/>
    </location>
</feature>
<feature type="splice variant" id="VSP_012995" description="In isoform 2." evidence="15">
    <location>
        <begin position="772"/>
        <end position="861"/>
    </location>
</feature>
<feature type="strand" evidence="19">
    <location>
        <begin position="507"/>
        <end position="514"/>
    </location>
</feature>
<feature type="strand" evidence="19">
    <location>
        <begin position="519"/>
        <end position="524"/>
    </location>
</feature>
<feature type="strand" evidence="19">
    <location>
        <begin position="531"/>
        <end position="543"/>
    </location>
</feature>
<feature type="strand" evidence="19">
    <location>
        <begin position="547"/>
        <end position="551"/>
    </location>
</feature>
<feature type="strand" evidence="19">
    <location>
        <begin position="556"/>
        <end position="560"/>
    </location>
</feature>
<feature type="strand" evidence="19">
    <location>
        <begin position="568"/>
        <end position="577"/>
    </location>
</feature>
<feature type="strand" evidence="19">
    <location>
        <begin position="585"/>
        <end position="590"/>
    </location>
</feature>
<feature type="strand" evidence="19">
    <location>
        <begin position="597"/>
        <end position="604"/>
    </location>
</feature>
<feature type="strand" evidence="19">
    <location>
        <begin position="609"/>
        <end position="614"/>
    </location>
</feature>
<feature type="strand" evidence="19">
    <location>
        <begin position="621"/>
        <end position="629"/>
    </location>
</feature>
<feature type="strand" evidence="19">
    <location>
        <begin position="636"/>
        <end position="641"/>
    </location>
</feature>
<feature type="strand" evidence="19">
    <location>
        <begin position="644"/>
        <end position="652"/>
    </location>
</feature>
<feature type="strand" evidence="19">
    <location>
        <begin position="660"/>
        <end position="669"/>
    </location>
</feature>
<feature type="strand" evidence="19">
    <location>
        <begin position="677"/>
        <end position="682"/>
    </location>
</feature>
<feature type="strand" evidence="19">
    <location>
        <begin position="689"/>
        <end position="696"/>
    </location>
</feature>
<feature type="strand" evidence="19">
    <location>
        <begin position="701"/>
        <end position="706"/>
    </location>
</feature>
<feature type="strand" evidence="19">
    <location>
        <begin position="713"/>
        <end position="720"/>
    </location>
</feature>
<feature type="strand" evidence="19">
    <location>
        <begin position="722"/>
        <end position="724"/>
    </location>
</feature>
<feature type="strand" evidence="19">
    <location>
        <begin position="727"/>
        <end position="734"/>
    </location>
</feature>
<feature type="strand" evidence="19">
    <location>
        <begin position="736"/>
        <end position="740"/>
    </location>
</feature>
<feature type="strand" evidence="19">
    <location>
        <begin position="749"/>
        <end position="757"/>
    </location>
</feature>
<feature type="strand" evidence="19">
    <location>
        <begin position="765"/>
        <end position="769"/>
    </location>
</feature>
<dbReference type="EMBL" id="Z18630">
    <property type="protein sequence ID" value="CAA79229.1"/>
    <property type="molecule type" value="mRNA"/>
</dbReference>
<dbReference type="PIR" id="A45445">
    <property type="entry name" value="A45445"/>
</dbReference>
<dbReference type="RefSeq" id="NP_037177.1">
    <property type="nucleotide sequence ID" value="NM_013045.1"/>
</dbReference>
<dbReference type="PDB" id="1TDQ">
    <property type="method" value="X-ray"/>
    <property type="resolution" value="2.60 A"/>
    <property type="chains" value="A=502-771"/>
</dbReference>
<dbReference type="PDBsum" id="1TDQ"/>
<dbReference type="SMR" id="Q05546"/>
<dbReference type="BioGRID" id="247598">
    <property type="interactions" value="2"/>
</dbReference>
<dbReference type="FunCoup" id="Q05546">
    <property type="interactions" value="729"/>
</dbReference>
<dbReference type="IntAct" id="Q05546">
    <property type="interactions" value="2"/>
</dbReference>
<dbReference type="MINT" id="Q05546"/>
<dbReference type="STRING" id="10116.ENSRNOP00000068101"/>
<dbReference type="GlyCosmos" id="Q05546">
    <property type="glycosylation" value="13 sites, 3 glycans"/>
</dbReference>
<dbReference type="GlyGen" id="Q05546">
    <property type="glycosylation" value="18 sites, 3 N-linked glycans (1 site), 1 N-linked;o-linked glycan (1 site)"/>
</dbReference>
<dbReference type="iPTMnet" id="Q05546"/>
<dbReference type="PhosphoSitePlus" id="Q05546"/>
<dbReference type="PaxDb" id="10116-ENSRNOP00000068101"/>
<dbReference type="GeneID" id="25567"/>
<dbReference type="KEGG" id="rno:25567"/>
<dbReference type="AGR" id="RGD:3886"/>
<dbReference type="CTD" id="7143"/>
<dbReference type="RGD" id="3886">
    <property type="gene designation" value="Tnr"/>
</dbReference>
<dbReference type="eggNOG" id="KOG1225">
    <property type="taxonomic scope" value="Eukaryota"/>
</dbReference>
<dbReference type="eggNOG" id="KOG2579">
    <property type="taxonomic scope" value="Eukaryota"/>
</dbReference>
<dbReference type="InParanoid" id="Q05546"/>
<dbReference type="PhylomeDB" id="Q05546"/>
<dbReference type="Reactome" id="R-RNO-3000178">
    <property type="pathway name" value="ECM proteoglycans"/>
</dbReference>
<dbReference type="EvolutionaryTrace" id="Q05546"/>
<dbReference type="PRO" id="PR:Q05546"/>
<dbReference type="Proteomes" id="UP000002494">
    <property type="component" value="Unplaced"/>
</dbReference>
<dbReference type="GO" id="GO:0009986">
    <property type="term" value="C:cell surface"/>
    <property type="evidence" value="ECO:0000266"/>
    <property type="project" value="RGD"/>
</dbReference>
<dbReference type="GO" id="GO:0062023">
    <property type="term" value="C:collagen-containing extracellular matrix"/>
    <property type="evidence" value="ECO:0000318"/>
    <property type="project" value="GO_Central"/>
</dbReference>
<dbReference type="GO" id="GO:0031012">
    <property type="term" value="C:extracellular matrix"/>
    <property type="evidence" value="ECO:0000266"/>
    <property type="project" value="RGD"/>
</dbReference>
<dbReference type="GO" id="GO:0005615">
    <property type="term" value="C:extracellular space"/>
    <property type="evidence" value="ECO:0000318"/>
    <property type="project" value="GO_Central"/>
</dbReference>
<dbReference type="GO" id="GO:0098978">
    <property type="term" value="C:glutamatergic synapse"/>
    <property type="evidence" value="ECO:0000266"/>
    <property type="project" value="RGD"/>
</dbReference>
<dbReference type="GO" id="GO:0098686">
    <property type="term" value="C:hippocampal mossy fiber to CA3 synapse"/>
    <property type="evidence" value="ECO:0000314"/>
    <property type="project" value="SynGO"/>
</dbReference>
<dbReference type="GO" id="GO:0045121">
    <property type="term" value="C:membrane raft"/>
    <property type="evidence" value="ECO:0000266"/>
    <property type="project" value="RGD"/>
</dbReference>
<dbReference type="GO" id="GO:0072534">
    <property type="term" value="C:perineuronal net"/>
    <property type="evidence" value="ECO:0000266"/>
    <property type="project" value="RGD"/>
</dbReference>
<dbReference type="GO" id="GO:0098966">
    <property type="term" value="C:perisynaptic extracellular matrix"/>
    <property type="evidence" value="ECO:0000314"/>
    <property type="project" value="SynGO"/>
</dbReference>
<dbReference type="GO" id="GO:0098685">
    <property type="term" value="C:Schaffer collateral - CA1 synapse"/>
    <property type="evidence" value="ECO:0000266"/>
    <property type="project" value="RGD"/>
</dbReference>
<dbReference type="GO" id="GO:0090733">
    <property type="term" value="C:tenascin complex"/>
    <property type="evidence" value="ECO:0000266"/>
    <property type="project" value="RGD"/>
</dbReference>
<dbReference type="GO" id="GO:0005178">
    <property type="term" value="F:integrin binding"/>
    <property type="evidence" value="ECO:0000353"/>
    <property type="project" value="RGD"/>
</dbReference>
<dbReference type="GO" id="GO:0008306">
    <property type="term" value="P:associative learning"/>
    <property type="evidence" value="ECO:0000266"/>
    <property type="project" value="RGD"/>
</dbReference>
<dbReference type="GO" id="GO:0048675">
    <property type="term" value="P:axon extension"/>
    <property type="evidence" value="ECO:0000266"/>
    <property type="project" value="RGD"/>
</dbReference>
<dbReference type="GO" id="GO:0048677">
    <property type="term" value="P:axon extension involved in regeneration"/>
    <property type="evidence" value="ECO:0000266"/>
    <property type="project" value="RGD"/>
</dbReference>
<dbReference type="GO" id="GO:0030198">
    <property type="term" value="P:extracellular matrix organization"/>
    <property type="evidence" value="ECO:0000266"/>
    <property type="project" value="RGD"/>
</dbReference>
<dbReference type="GO" id="GO:0035641">
    <property type="term" value="P:locomotory exploration behavior"/>
    <property type="evidence" value="ECO:0000266"/>
    <property type="project" value="RGD"/>
</dbReference>
<dbReference type="GO" id="GO:0060291">
    <property type="term" value="P:long-term synaptic potentiation"/>
    <property type="evidence" value="ECO:0000266"/>
    <property type="project" value="RGD"/>
</dbReference>
<dbReference type="GO" id="GO:0050804">
    <property type="term" value="P:modulation of chemical synaptic transmission"/>
    <property type="evidence" value="ECO:0000266"/>
    <property type="project" value="RGD"/>
</dbReference>
<dbReference type="GO" id="GO:0030517">
    <property type="term" value="P:negative regulation of axon extension"/>
    <property type="evidence" value="ECO:0000266"/>
    <property type="project" value="RGD"/>
</dbReference>
<dbReference type="GO" id="GO:0048692">
    <property type="term" value="P:negative regulation of axon extension involved in regeneration"/>
    <property type="evidence" value="ECO:0000266"/>
    <property type="project" value="RGD"/>
</dbReference>
<dbReference type="GO" id="GO:0007162">
    <property type="term" value="P:negative regulation of cell adhesion"/>
    <property type="evidence" value="ECO:0000314"/>
    <property type="project" value="RGD"/>
</dbReference>
<dbReference type="GO" id="GO:0022408">
    <property type="term" value="P:negative regulation of cell-cell adhesion"/>
    <property type="evidence" value="ECO:0000266"/>
    <property type="project" value="RGD"/>
</dbReference>
<dbReference type="GO" id="GO:0010977">
    <property type="term" value="P:negative regulation of neuron projection development"/>
    <property type="evidence" value="ECO:0000266"/>
    <property type="project" value="RGD"/>
</dbReference>
<dbReference type="GO" id="GO:0050805">
    <property type="term" value="P:negative regulation of synaptic transmission"/>
    <property type="evidence" value="ECO:0000266"/>
    <property type="project" value="RGD"/>
</dbReference>
<dbReference type="GO" id="GO:0007399">
    <property type="term" value="P:nervous system development"/>
    <property type="evidence" value="ECO:0000318"/>
    <property type="project" value="GO_Central"/>
</dbReference>
<dbReference type="GO" id="GO:0097402">
    <property type="term" value="P:neuroblast migration"/>
    <property type="evidence" value="ECO:0000266"/>
    <property type="project" value="RGD"/>
</dbReference>
<dbReference type="GO" id="GO:0050885">
    <property type="term" value="P:neuromuscular process controlling balance"/>
    <property type="evidence" value="ECO:0000266"/>
    <property type="project" value="RGD"/>
</dbReference>
<dbReference type="GO" id="GO:0007158">
    <property type="term" value="P:neuron cell-cell adhesion"/>
    <property type="evidence" value="ECO:0000266"/>
    <property type="project" value="RGD"/>
</dbReference>
<dbReference type="GO" id="GO:0051968">
    <property type="term" value="P:positive regulation of synaptic transmission, glutamatergic"/>
    <property type="evidence" value="ECO:0000266"/>
    <property type="project" value="RGD"/>
</dbReference>
<dbReference type="GO" id="GO:0051971">
    <property type="term" value="P:positive regulation of transmission of nerve impulse"/>
    <property type="evidence" value="ECO:0000266"/>
    <property type="project" value="RGD"/>
</dbReference>
<dbReference type="GO" id="GO:0030155">
    <property type="term" value="P:regulation of cell adhesion"/>
    <property type="evidence" value="ECO:0000266"/>
    <property type="project" value="RGD"/>
</dbReference>
<dbReference type="GO" id="GO:0045595">
    <property type="term" value="P:regulation of cell differentiation"/>
    <property type="evidence" value="ECO:0000266"/>
    <property type="project" value="RGD"/>
</dbReference>
<dbReference type="GO" id="GO:0030334">
    <property type="term" value="P:regulation of cell migration"/>
    <property type="evidence" value="ECO:0000266"/>
    <property type="project" value="RGD"/>
</dbReference>
<dbReference type="GO" id="GO:0050808">
    <property type="term" value="P:synapse organization"/>
    <property type="evidence" value="ECO:0000266"/>
    <property type="project" value="RGD"/>
</dbReference>
<dbReference type="GO" id="GO:0035249">
    <property type="term" value="P:synaptic transmission, glutamatergic"/>
    <property type="evidence" value="ECO:0000266"/>
    <property type="project" value="RGD"/>
</dbReference>
<dbReference type="GO" id="GO:0022029">
    <property type="term" value="P:telencephalon cell migration"/>
    <property type="evidence" value="ECO:0000266"/>
    <property type="project" value="RGD"/>
</dbReference>
<dbReference type="CDD" id="cd00063">
    <property type="entry name" value="FN3"/>
    <property type="match status" value="9"/>
</dbReference>
<dbReference type="CDD" id="cd00087">
    <property type="entry name" value="FReD"/>
    <property type="match status" value="1"/>
</dbReference>
<dbReference type="FunFam" id="2.60.40.10:FF:000099">
    <property type="entry name" value="Fibronectin 1"/>
    <property type="match status" value="2"/>
</dbReference>
<dbReference type="FunFam" id="2.10.25.10:FF:000001">
    <property type="entry name" value="Tenascin C"/>
    <property type="match status" value="4"/>
</dbReference>
<dbReference type="FunFam" id="2.60.40.10:FF:000201">
    <property type="entry name" value="Tenascin C"/>
    <property type="match status" value="1"/>
</dbReference>
<dbReference type="FunFam" id="2.60.40.10:FF:000207">
    <property type="entry name" value="Tenascin C"/>
    <property type="match status" value="1"/>
</dbReference>
<dbReference type="FunFam" id="3.90.215.10:FF:000001">
    <property type="entry name" value="Tenascin isoform 1"/>
    <property type="match status" value="1"/>
</dbReference>
<dbReference type="FunFam" id="2.60.40.10:FF:000609">
    <property type="entry name" value="Tenascin R"/>
    <property type="match status" value="1"/>
</dbReference>
<dbReference type="FunFam" id="2.60.40.10:FF:000682">
    <property type="entry name" value="Tenascin R"/>
    <property type="match status" value="1"/>
</dbReference>
<dbReference type="FunFam" id="2.60.40.10:FF:000691">
    <property type="entry name" value="Tenascin R"/>
    <property type="match status" value="1"/>
</dbReference>
<dbReference type="FunFam" id="2.60.40.10:FF:000722">
    <property type="entry name" value="Tenascin R"/>
    <property type="match status" value="1"/>
</dbReference>
<dbReference type="FunFam" id="2.60.40.10:FF:001249">
    <property type="entry name" value="Tenascin R"/>
    <property type="match status" value="1"/>
</dbReference>
<dbReference type="Gene3D" id="3.90.215.10">
    <property type="entry name" value="Gamma Fibrinogen, chain A, domain 1"/>
    <property type="match status" value="1"/>
</dbReference>
<dbReference type="Gene3D" id="2.60.40.10">
    <property type="entry name" value="Immunoglobulins"/>
    <property type="match status" value="9"/>
</dbReference>
<dbReference type="Gene3D" id="2.10.25.10">
    <property type="entry name" value="Laminin"/>
    <property type="match status" value="4"/>
</dbReference>
<dbReference type="InterPro" id="IPR050991">
    <property type="entry name" value="ECM_Regulatory_Proteins"/>
</dbReference>
<dbReference type="InterPro" id="IPR000742">
    <property type="entry name" value="EGF-like_dom"/>
</dbReference>
<dbReference type="InterPro" id="IPR036056">
    <property type="entry name" value="Fibrinogen-like_C"/>
</dbReference>
<dbReference type="InterPro" id="IPR014716">
    <property type="entry name" value="Fibrinogen_a/b/g_C_1"/>
</dbReference>
<dbReference type="InterPro" id="IPR002181">
    <property type="entry name" value="Fibrinogen_a/b/g_C_dom"/>
</dbReference>
<dbReference type="InterPro" id="IPR003961">
    <property type="entry name" value="FN3_dom"/>
</dbReference>
<dbReference type="InterPro" id="IPR036116">
    <property type="entry name" value="FN3_sf"/>
</dbReference>
<dbReference type="InterPro" id="IPR013783">
    <property type="entry name" value="Ig-like_fold"/>
</dbReference>
<dbReference type="NCBIfam" id="NF040941">
    <property type="entry name" value="GGGWT_bact"/>
    <property type="match status" value="1"/>
</dbReference>
<dbReference type="PANTHER" id="PTHR46708">
    <property type="entry name" value="TENASCIN"/>
    <property type="match status" value="1"/>
</dbReference>
<dbReference type="PANTHER" id="PTHR46708:SF13">
    <property type="entry name" value="TENASCIN-R"/>
    <property type="match status" value="1"/>
</dbReference>
<dbReference type="Pfam" id="PF25024">
    <property type="entry name" value="EGF_TEN"/>
    <property type="match status" value="1"/>
</dbReference>
<dbReference type="Pfam" id="PF23106">
    <property type="entry name" value="EGF_Teneurin"/>
    <property type="match status" value="1"/>
</dbReference>
<dbReference type="Pfam" id="PF00147">
    <property type="entry name" value="Fibrinogen_C"/>
    <property type="match status" value="1"/>
</dbReference>
<dbReference type="Pfam" id="PF00041">
    <property type="entry name" value="fn3"/>
    <property type="match status" value="9"/>
</dbReference>
<dbReference type="SMART" id="SM00181">
    <property type="entry name" value="EGF"/>
    <property type="match status" value="4"/>
</dbReference>
<dbReference type="SMART" id="SM00186">
    <property type="entry name" value="FBG"/>
    <property type="match status" value="1"/>
</dbReference>
<dbReference type="SMART" id="SM00060">
    <property type="entry name" value="FN3"/>
    <property type="match status" value="9"/>
</dbReference>
<dbReference type="SUPFAM" id="SSF56496">
    <property type="entry name" value="Fibrinogen C-terminal domain-like"/>
    <property type="match status" value="1"/>
</dbReference>
<dbReference type="SUPFAM" id="SSF49265">
    <property type="entry name" value="Fibronectin type III"/>
    <property type="match status" value="5"/>
</dbReference>
<dbReference type="PROSITE" id="PS00022">
    <property type="entry name" value="EGF_1"/>
    <property type="match status" value="5"/>
</dbReference>
<dbReference type="PROSITE" id="PS01186">
    <property type="entry name" value="EGF_2"/>
    <property type="match status" value="4"/>
</dbReference>
<dbReference type="PROSITE" id="PS51406">
    <property type="entry name" value="FIBRINOGEN_C_2"/>
    <property type="match status" value="1"/>
</dbReference>
<dbReference type="PROSITE" id="PS50853">
    <property type="entry name" value="FN3"/>
    <property type="match status" value="9"/>
</dbReference>